<evidence type="ECO:0000255" key="1">
    <source>
        <dbReference type="HAMAP-Rule" id="MF_01390"/>
    </source>
</evidence>
<sequence>MEKFEGYSEKHKSRQQYFVYPLLFQEYIYAFAHDYGLNGSEPVEIVSCNNKKFSSLLVKRLIIRIYQQNFWDNSVNHPNQDRLLYYKNYFYSEFYSQILSEGFAILVEIPFSLRELSCPKEKEIPKFQNLRSIHSIFPFLEDKFLHLDYLSHIEIPYPIHLEILVQLLQYRIQDVPSLHLLRFFLNYYSNSNSFITSMKSIFIFKKENKRLFRFLYNSYVSEYEFFLLFLRKQSSCLPLASSGTFLERIHFSRKMEHFWIMYPGFSRKNLWFFMDPLIHYVRYQGKAILASKGTFFLKKKWKCYHINLWQYYFRFWTQPRRIHINQLANSCFDFMGYLSSVPKSPLLVRNKMLENSFLIDTRMKKFDTIVPATLLIGYLSKAQFCTGSGHPISKPIWTDLSDWDILDRFGRICRNLFHYHSGSSKKQTLYRLKYILRLSCARTLARKHKSTVRTFMQRLGSVFLEEFFTEEEQIFCLMFTKTTLFSFSGSHTERIWYLDIIRINDLVNPLN</sequence>
<feature type="chain" id="PRO_0000143292" description="Maturase K">
    <location>
        <begin position="1"/>
        <end position="511"/>
    </location>
</feature>
<geneLocation type="chloroplast"/>
<proteinExistence type="inferred from homology"/>
<organism>
    <name type="scientific">Bromus inermis</name>
    <name type="common">Smooth brome grass</name>
    <name type="synonym">Bromopsis inermis</name>
    <dbReference type="NCBI Taxonomy" id="15371"/>
    <lineage>
        <taxon>Eukaryota</taxon>
        <taxon>Viridiplantae</taxon>
        <taxon>Streptophyta</taxon>
        <taxon>Embryophyta</taxon>
        <taxon>Tracheophyta</taxon>
        <taxon>Spermatophyta</taxon>
        <taxon>Magnoliopsida</taxon>
        <taxon>Liliopsida</taxon>
        <taxon>Poales</taxon>
        <taxon>Poaceae</taxon>
        <taxon>BOP clade</taxon>
        <taxon>Pooideae</taxon>
        <taxon>Triticodae</taxon>
        <taxon>Bromeae</taxon>
        <taxon>Bromus</taxon>
    </lineage>
</organism>
<name>MATK_BROIN</name>
<dbReference type="EMBL" id="AF164398">
    <property type="protein sequence ID" value="AAF66185.1"/>
    <property type="molecule type" value="Genomic_DNA"/>
</dbReference>
<dbReference type="GO" id="GO:0009507">
    <property type="term" value="C:chloroplast"/>
    <property type="evidence" value="ECO:0007669"/>
    <property type="project" value="UniProtKB-SubCell"/>
</dbReference>
<dbReference type="GO" id="GO:0003723">
    <property type="term" value="F:RNA binding"/>
    <property type="evidence" value="ECO:0007669"/>
    <property type="project" value="UniProtKB-KW"/>
</dbReference>
<dbReference type="GO" id="GO:0006397">
    <property type="term" value="P:mRNA processing"/>
    <property type="evidence" value="ECO:0007669"/>
    <property type="project" value="UniProtKB-KW"/>
</dbReference>
<dbReference type="GO" id="GO:0008380">
    <property type="term" value="P:RNA splicing"/>
    <property type="evidence" value="ECO:0007669"/>
    <property type="project" value="UniProtKB-UniRule"/>
</dbReference>
<dbReference type="GO" id="GO:0008033">
    <property type="term" value="P:tRNA processing"/>
    <property type="evidence" value="ECO:0007669"/>
    <property type="project" value="UniProtKB-KW"/>
</dbReference>
<dbReference type="HAMAP" id="MF_01390">
    <property type="entry name" value="MatK"/>
    <property type="match status" value="1"/>
</dbReference>
<dbReference type="InterPro" id="IPR024937">
    <property type="entry name" value="Domain_X"/>
</dbReference>
<dbReference type="InterPro" id="IPR002866">
    <property type="entry name" value="Maturase_MatK"/>
</dbReference>
<dbReference type="InterPro" id="IPR024942">
    <property type="entry name" value="Maturase_MatK_N"/>
</dbReference>
<dbReference type="PANTHER" id="PTHR34811">
    <property type="entry name" value="MATURASE K"/>
    <property type="match status" value="1"/>
</dbReference>
<dbReference type="PANTHER" id="PTHR34811:SF1">
    <property type="entry name" value="MATURASE K"/>
    <property type="match status" value="1"/>
</dbReference>
<dbReference type="Pfam" id="PF01348">
    <property type="entry name" value="Intron_maturas2"/>
    <property type="match status" value="1"/>
</dbReference>
<dbReference type="Pfam" id="PF01824">
    <property type="entry name" value="MatK_N"/>
    <property type="match status" value="1"/>
</dbReference>
<accession>Q9MUZ3</accession>
<comment type="function">
    <text evidence="1">Usually encoded in the trnK tRNA gene intron. Probably assists in splicing its own and other chloroplast group II introns.</text>
</comment>
<comment type="subcellular location">
    <subcellularLocation>
        <location>Plastid</location>
        <location>Chloroplast</location>
    </subcellularLocation>
</comment>
<comment type="similarity">
    <text evidence="1">Belongs to the intron maturase 2 family. MatK subfamily.</text>
</comment>
<reference key="1">
    <citation type="journal article" date="1999" name="Ann. Mo. Bot. Gard.">
        <title>Phylogeny of Poaceae inferred from matK sequences.</title>
        <authorList>
            <person name="Hilu K.W."/>
            <person name="Alice L.A."/>
            <person name="Liang H."/>
        </authorList>
    </citation>
    <scope>NUCLEOTIDE SEQUENCE [GENOMIC DNA]</scope>
</reference>
<protein>
    <recommendedName>
        <fullName evidence="1">Maturase K</fullName>
    </recommendedName>
    <alternativeName>
        <fullName evidence="1">Intron maturase</fullName>
    </alternativeName>
</protein>
<keyword id="KW-0150">Chloroplast</keyword>
<keyword id="KW-0507">mRNA processing</keyword>
<keyword id="KW-0934">Plastid</keyword>
<keyword id="KW-0694">RNA-binding</keyword>
<keyword id="KW-0819">tRNA processing</keyword>
<gene>
    <name evidence="1" type="primary">matK</name>
</gene>